<sequence>MKLVTIFLLVTISLCSYSATAFLINKVPLPVDKLAPLPLDNILPFMDPLKLLLKTLGISVEHLVEGLRKCVNELGPEASEAVKKLLEALSHLV</sequence>
<evidence type="ECO:0000250" key="1">
    <source>
        <dbReference type="UniProtKB" id="Q920H1"/>
    </source>
</evidence>
<evidence type="ECO:0000269" key="2">
    <source>
    </source>
</evidence>
<evidence type="ECO:0000269" key="3">
    <source>
    </source>
</evidence>
<evidence type="ECO:0000269" key="4">
    <source>
    </source>
</evidence>
<evidence type="ECO:0000269" key="5">
    <source>
    </source>
</evidence>
<evidence type="ECO:0000269" key="6">
    <source>
    </source>
</evidence>
<evidence type="ECO:0000305" key="7"/>
<gene>
    <name type="primary">SCGB3A2</name>
    <name type="synonym">PNSP1</name>
    <name type="synonym">UGRP1</name>
    <name type="ORF">UNQ566/PRO1128</name>
</gene>
<accession>Q96PL1</accession>
<keyword id="KW-1015">Disulfide bond</keyword>
<keyword id="KW-1267">Proteomics identification</keyword>
<keyword id="KW-1185">Reference proteome</keyword>
<keyword id="KW-0964">Secreted</keyword>
<keyword id="KW-0732">Signal</keyword>
<dbReference type="EMBL" id="AF313455">
    <property type="protein sequence ID" value="AAL26215.1"/>
    <property type="molecule type" value="mRNA"/>
</dbReference>
<dbReference type="EMBL" id="AF439544">
    <property type="protein sequence ID" value="AAQ04559.1"/>
    <property type="molecule type" value="Genomic_DNA"/>
</dbReference>
<dbReference type="EMBL" id="AF439545">
    <property type="protein sequence ID" value="AAQ04560.1"/>
    <property type="molecule type" value="mRNA"/>
</dbReference>
<dbReference type="EMBL" id="AY358979">
    <property type="protein sequence ID" value="AAQ89338.1"/>
    <property type="molecule type" value="mRNA"/>
</dbReference>
<dbReference type="EMBL" id="BC024232">
    <property type="protein sequence ID" value="AAH24232.1"/>
    <property type="molecule type" value="mRNA"/>
</dbReference>
<dbReference type="CCDS" id="CCDS4287.1"/>
<dbReference type="RefSeq" id="NP_473364.1">
    <property type="nucleotide sequence ID" value="NM_054023.5"/>
</dbReference>
<dbReference type="BioGRID" id="125562">
    <property type="interactions" value="1"/>
</dbReference>
<dbReference type="FunCoup" id="Q96PL1">
    <property type="interactions" value="6"/>
</dbReference>
<dbReference type="STRING" id="9606.ENSP00000296694"/>
<dbReference type="iPTMnet" id="Q96PL1"/>
<dbReference type="PhosphoSitePlus" id="Q96PL1"/>
<dbReference type="BioMuta" id="SCGB3A2"/>
<dbReference type="MassIVE" id="Q96PL1"/>
<dbReference type="PaxDb" id="9606-ENSP00000296694"/>
<dbReference type="PeptideAtlas" id="Q96PL1"/>
<dbReference type="ProteomicsDB" id="77706"/>
<dbReference type="Antibodypedia" id="27663">
    <property type="antibodies" value="47 antibodies from 16 providers"/>
</dbReference>
<dbReference type="DNASU" id="117156"/>
<dbReference type="Ensembl" id="ENST00000296694.5">
    <property type="protein sequence ID" value="ENSP00000296694.4"/>
    <property type="gene ID" value="ENSG00000164265.9"/>
</dbReference>
<dbReference type="GeneID" id="117156"/>
<dbReference type="KEGG" id="hsa:117156"/>
<dbReference type="MANE-Select" id="ENST00000296694.5">
    <property type="protein sequence ID" value="ENSP00000296694.4"/>
    <property type="RefSeq nucleotide sequence ID" value="NM_054023.5"/>
    <property type="RefSeq protein sequence ID" value="NP_473364.1"/>
</dbReference>
<dbReference type="UCSC" id="uc003lot.3">
    <property type="organism name" value="human"/>
</dbReference>
<dbReference type="AGR" id="HGNC:18391"/>
<dbReference type="CTD" id="117156"/>
<dbReference type="DisGeNET" id="117156"/>
<dbReference type="GeneCards" id="SCGB3A2"/>
<dbReference type="HGNC" id="HGNC:18391">
    <property type="gene designation" value="SCGB3A2"/>
</dbReference>
<dbReference type="HPA" id="ENSG00000164265">
    <property type="expression patterns" value="Tissue enriched (lung)"/>
</dbReference>
<dbReference type="MalaCards" id="SCGB3A2"/>
<dbReference type="MIM" id="606531">
    <property type="type" value="gene"/>
</dbReference>
<dbReference type="neXtProt" id="NX_Q96PL1"/>
<dbReference type="OpenTargets" id="ENSG00000164265"/>
<dbReference type="PharmGKB" id="PA34995"/>
<dbReference type="VEuPathDB" id="HostDB:ENSG00000164265"/>
<dbReference type="eggNOG" id="ENOG502SVJM">
    <property type="taxonomic scope" value="Eukaryota"/>
</dbReference>
<dbReference type="GeneTree" id="ENSGT00420000029848"/>
<dbReference type="HOGENOM" id="CLU_146812_0_0_1"/>
<dbReference type="InParanoid" id="Q96PL1"/>
<dbReference type="OMA" id="ISICTYS"/>
<dbReference type="OrthoDB" id="9833134at2759"/>
<dbReference type="PAN-GO" id="Q96PL1">
    <property type="GO annotations" value="1 GO annotation based on evolutionary models"/>
</dbReference>
<dbReference type="PhylomeDB" id="Q96PL1"/>
<dbReference type="TreeFam" id="TF336928"/>
<dbReference type="PathwayCommons" id="Q96PL1"/>
<dbReference type="Reactome" id="R-HSA-3000480">
    <property type="pathway name" value="Scavenging by Class A Receptors"/>
</dbReference>
<dbReference type="SignaLink" id="Q96PL1"/>
<dbReference type="BioGRID-ORCS" id="117156">
    <property type="hits" value="4 hits in 1140 CRISPR screens"/>
</dbReference>
<dbReference type="GeneWiki" id="SCGB3A2"/>
<dbReference type="GenomeRNAi" id="117156"/>
<dbReference type="Pharos" id="Q96PL1">
    <property type="development level" value="Tbio"/>
</dbReference>
<dbReference type="PRO" id="PR:Q96PL1"/>
<dbReference type="Proteomes" id="UP000005640">
    <property type="component" value="Chromosome 5"/>
</dbReference>
<dbReference type="RNAct" id="Q96PL1">
    <property type="molecule type" value="protein"/>
</dbReference>
<dbReference type="Bgee" id="ENSG00000164265">
    <property type="expression patterns" value="Expressed in trachea and 116 other cell types or tissues"/>
</dbReference>
<dbReference type="ExpressionAtlas" id="Q96PL1">
    <property type="expression patterns" value="baseline and differential"/>
</dbReference>
<dbReference type="GO" id="GO:0071682">
    <property type="term" value="C:endocytic vesicle lumen"/>
    <property type="evidence" value="ECO:0000304"/>
    <property type="project" value="Reactome"/>
</dbReference>
<dbReference type="GO" id="GO:0005576">
    <property type="term" value="C:extracellular region"/>
    <property type="evidence" value="ECO:0000304"/>
    <property type="project" value="Reactome"/>
</dbReference>
<dbReference type="GO" id="GO:0005615">
    <property type="term" value="C:extracellular space"/>
    <property type="evidence" value="ECO:0000318"/>
    <property type="project" value="GO_Central"/>
</dbReference>
<dbReference type="InterPro" id="IPR040301">
    <property type="entry name" value="Secretoglobin_3A"/>
</dbReference>
<dbReference type="PANTHER" id="PTHR34829">
    <property type="entry name" value="SECRETOGLOBIN FAMILY 3A MEMBER 2"/>
    <property type="match status" value="1"/>
</dbReference>
<dbReference type="PANTHER" id="PTHR34829:SF2">
    <property type="entry name" value="SECRETOGLOBIN FAMILY 3A MEMBER 2"/>
    <property type="match status" value="1"/>
</dbReference>
<dbReference type="Pfam" id="PF20490">
    <property type="entry name" value="SCGB3A"/>
    <property type="match status" value="1"/>
</dbReference>
<feature type="signal peptide" evidence="4">
    <location>
        <begin position="1"/>
        <end position="21"/>
    </location>
</feature>
<feature type="chain" id="PRO_0000036381" description="Secretoglobin family 3A member 2">
    <location>
        <begin position="22"/>
        <end position="93"/>
    </location>
</feature>
<feature type="disulfide bond" description="Interchain" evidence="1">
    <location>
        <position position="70"/>
    </location>
</feature>
<feature type="sequence variant" id="VAR_036185" description="In a breast cancer sample; somatic mutation." evidence="5">
    <original>K</original>
    <variation>N</variation>
    <location>
        <position position="33"/>
    </location>
</feature>
<organism>
    <name type="scientific">Homo sapiens</name>
    <name type="common">Human</name>
    <dbReference type="NCBI Taxonomy" id="9606"/>
    <lineage>
        <taxon>Eukaryota</taxon>
        <taxon>Metazoa</taxon>
        <taxon>Chordata</taxon>
        <taxon>Craniata</taxon>
        <taxon>Vertebrata</taxon>
        <taxon>Euteleostomi</taxon>
        <taxon>Mammalia</taxon>
        <taxon>Eutheria</taxon>
        <taxon>Euarchontoglires</taxon>
        <taxon>Primates</taxon>
        <taxon>Haplorrhini</taxon>
        <taxon>Catarrhini</taxon>
        <taxon>Hominidae</taxon>
        <taxon>Homo</taxon>
    </lineage>
</organism>
<reference key="1">
    <citation type="journal article" date="2001" name="Mol. Endocrinol.">
        <title>UGRP1, a uteroglobin/Clara cell secretory protein-related protein, is a novel lung-enriched downstream target gene for the T/EBP/NKX2.1 homeodomain transcription factor.</title>
        <authorList>
            <person name="Niimi T."/>
            <person name="Keck-Waggoner C.L."/>
            <person name="Popescu N.C."/>
            <person name="Zhou Y."/>
            <person name="Levitt R.C."/>
            <person name="Kimura S."/>
        </authorList>
    </citation>
    <scope>NUCLEOTIDE SEQUENCE [MRNA]</scope>
</reference>
<reference key="2">
    <citation type="submission" date="2001-10" db="EMBL/GenBank/DDBJ databases">
        <title>Molecular cloning of PnSP-1, a protein of the respiratory tract with potential association to atopy.</title>
        <authorList>
            <person name="Clippe A."/>
            <person name="Laing I.A."/>
            <person name="LeSouef P.N."/>
            <person name="Bernard A."/>
            <person name="Knoops B."/>
        </authorList>
    </citation>
    <scope>NUCLEOTIDE SEQUENCE [GENOMIC DNA / MRNA]</scope>
</reference>
<reference key="3">
    <citation type="journal article" date="2003" name="Genome Res.">
        <title>The secreted protein discovery initiative (SPDI), a large-scale effort to identify novel human secreted and transmembrane proteins: a bioinformatics assessment.</title>
        <authorList>
            <person name="Clark H.F."/>
            <person name="Gurney A.L."/>
            <person name="Abaya E."/>
            <person name="Baker K."/>
            <person name="Baldwin D.T."/>
            <person name="Brush J."/>
            <person name="Chen J."/>
            <person name="Chow B."/>
            <person name="Chui C."/>
            <person name="Crowley C."/>
            <person name="Currell B."/>
            <person name="Deuel B."/>
            <person name="Dowd P."/>
            <person name="Eaton D."/>
            <person name="Foster J.S."/>
            <person name="Grimaldi C."/>
            <person name="Gu Q."/>
            <person name="Hass P.E."/>
            <person name="Heldens S."/>
            <person name="Huang A."/>
            <person name="Kim H.S."/>
            <person name="Klimowski L."/>
            <person name="Jin Y."/>
            <person name="Johnson S."/>
            <person name="Lee J."/>
            <person name="Lewis L."/>
            <person name="Liao D."/>
            <person name="Mark M.R."/>
            <person name="Robbie E."/>
            <person name="Sanchez C."/>
            <person name="Schoenfeld J."/>
            <person name="Seshagiri S."/>
            <person name="Simmons L."/>
            <person name="Singh J."/>
            <person name="Smith V."/>
            <person name="Stinson J."/>
            <person name="Vagts A."/>
            <person name="Vandlen R.L."/>
            <person name="Watanabe C."/>
            <person name="Wieand D."/>
            <person name="Woods K."/>
            <person name="Xie M.-H."/>
            <person name="Yansura D.G."/>
            <person name="Yi S."/>
            <person name="Yu G."/>
            <person name="Yuan J."/>
            <person name="Zhang M."/>
            <person name="Zhang Z."/>
            <person name="Goddard A.D."/>
            <person name="Wood W.I."/>
            <person name="Godowski P.J."/>
            <person name="Gray A.M."/>
        </authorList>
    </citation>
    <scope>NUCLEOTIDE SEQUENCE [LARGE SCALE MRNA]</scope>
</reference>
<reference key="4">
    <citation type="journal article" date="2004" name="Genome Res.">
        <title>The status, quality, and expansion of the NIH full-length cDNA project: the Mammalian Gene Collection (MGC).</title>
        <authorList>
            <consortium name="The MGC Project Team"/>
        </authorList>
    </citation>
    <scope>NUCLEOTIDE SEQUENCE [LARGE SCALE MRNA]</scope>
    <source>
        <tissue>Lung</tissue>
    </source>
</reference>
<reference key="5">
    <citation type="journal article" date="2002" name="Am. J. Respir. Crit. Care Med.">
        <title>Secretoglobins SCGB3A1 and SCGB3A2 define secretory cell subsets in mouse and human airways.</title>
        <authorList>
            <person name="Reynolds S.D."/>
            <person name="Reynolds P.R."/>
            <person name="Pryhuber G.S."/>
            <person name="Finder J.D."/>
            <person name="Stripp B.R."/>
        </authorList>
    </citation>
    <scope>TISSUE SPECIFICITY</scope>
</reference>
<reference key="6">
    <citation type="journal article" date="2002" name="Mech. Dev.">
        <title>Expression of high in normal-1 (HIN-1) and uteroglobin related protein-1 (UGRP-1) in adult and developing tissues.</title>
        <authorList>
            <person name="Porter D."/>
            <person name="Lahti-Domenici J."/>
            <person name="Torres-Arzayus M."/>
            <person name="Chin L."/>
            <person name="Polyak K."/>
        </authorList>
    </citation>
    <scope>TISSUE SPECIFICITY</scope>
    <scope>DEVELOPMENTAL STAGE</scope>
</reference>
<reference key="7">
    <citation type="journal article" date="2003" name="J. Immunol.">
        <title>Identification of uteroglobin-related protein 1 and macrophage scavenger receptor with collagenous structure as a lung-specific ligand-receptor pair.</title>
        <authorList>
            <person name="Bin L.H."/>
            <person name="Nielson L.D."/>
            <person name="Liu X."/>
            <person name="Mason R.J."/>
            <person name="Shu H.B."/>
        </authorList>
    </citation>
    <scope>FUNCTION</scope>
    <scope>INTERACTION WITH APOA1</scope>
    <scope>SUBCELLULAR LOCATION</scope>
    <scope>TISSUE SPECIFICITY</scope>
    <scope>SIGNAL SEQUENCE CLEAVAGE SITE</scope>
</reference>
<reference key="8">
    <citation type="journal article" date="2014" name="Am. J. Physiol.">
        <title>Preclinical evaluation of human secretoglobin 3A2 in mouse models of lung development and fibrosis.</title>
        <authorList>
            <person name="Cai Y."/>
            <person name="Winn M.E."/>
            <person name="Zehmer J.K."/>
            <person name="Gillette W.K."/>
            <person name="Lubkowski J.T."/>
            <person name="Pilon A.L."/>
            <person name="Kimura S."/>
        </authorList>
    </citation>
    <scope>FUNCTION</scope>
    <scope>SUBUNIT</scope>
</reference>
<reference key="9">
    <citation type="journal article" date="2006" name="Science">
        <title>The consensus coding sequences of human breast and colorectal cancers.</title>
        <authorList>
            <person name="Sjoeblom T."/>
            <person name="Jones S."/>
            <person name="Wood L.D."/>
            <person name="Parsons D.W."/>
            <person name="Lin J."/>
            <person name="Barber T.D."/>
            <person name="Mandelker D."/>
            <person name="Leary R.J."/>
            <person name="Ptak J."/>
            <person name="Silliman N."/>
            <person name="Szabo S."/>
            <person name="Buckhaults P."/>
            <person name="Farrell C."/>
            <person name="Meeh P."/>
            <person name="Markowitz S.D."/>
            <person name="Willis J."/>
            <person name="Dawson D."/>
            <person name="Willson J.K.V."/>
            <person name="Gazdar A.F."/>
            <person name="Hartigan J."/>
            <person name="Wu L."/>
            <person name="Liu C."/>
            <person name="Parmigiani G."/>
            <person name="Park B.H."/>
            <person name="Bachman K.E."/>
            <person name="Papadopoulos N."/>
            <person name="Vogelstein B."/>
            <person name="Kinzler K.W."/>
            <person name="Velculescu V.E."/>
        </authorList>
    </citation>
    <scope>VARIANT [LARGE SCALE ANALYSIS] ASN-33</scope>
</reference>
<protein>
    <recommendedName>
        <fullName>Secretoglobin family 3A member 2</fullName>
    </recommendedName>
    <alternativeName>
        <fullName>Pneumo secretory protein 1</fullName>
        <shortName>PnSP-1</shortName>
    </alternativeName>
    <alternativeName>
        <fullName>Uteroglobin-related protein 1</fullName>
    </alternativeName>
</protein>
<proteinExistence type="evidence at protein level"/>
<name>SG3A2_HUMAN</name>
<comment type="function">
    <text evidence="1 4 6">Secreted cytokine-like protein (PubMed:12847263). Binds to the scavenger receptor MARCO (PubMed:12847263). Can also bind to pathogens including the Gram-positive bacterium L.monocytogenes, the Gram-negative bacterium P.aeruginosa, and yeast (PubMed:12847263). Strongly inhibits phospholipase A2 (PLA2G1B) activity (PubMed:24213919). Seems to have anti-inflammatory effects in respiratory epithelium (By similarity). Also has anti-fibrotic activity in lung (PubMed:24213919). May play a role in fetal lung development and maturation (PubMed:24213919). Promotes branching morphogenesis during early stages of lung development (PubMed:24213919). In the pituitary, may inhibit production of follicle-stimulating hormone (FSH) and luteinizing hormone (LH) (By similarity).</text>
</comment>
<comment type="subunit">
    <text evidence="4 6">Homodimer; disulfide-linked (PubMed:24213919). Monomer (PubMed:24213919). Interacts with APOA1 (PubMed:12847263).</text>
</comment>
<comment type="subcellular location">
    <subcellularLocation>
        <location evidence="4">Secreted</location>
    </subcellularLocation>
</comment>
<comment type="tissue specificity">
    <text evidence="2 3 4">Highly expressed in lung and trachea (PubMed:12175512, PubMed:12406855, PubMed:12847263). Detected throughout the airway epithelium in lung, with slightly higher expression in large airways (PubMed:12406855). Found in lung submucosal gland acinus where it localizes to serous-like cells (PubMed:12406855). Probably expressed in club cells of the bronchioles (PubMed:12847263). Not detected in other tissues tested (PubMed:12847263).</text>
</comment>
<comment type="developmental stage">
    <text evidence="2">Expressed in fetal lung.</text>
</comment>
<comment type="similarity">
    <text evidence="7">Belongs to the secretoglobin family. UGRP subfamily.</text>
</comment>